<organism>
    <name type="scientific">Equus quagga burchellii</name>
    <name type="common">Burchell's zebra</name>
    <name type="synonym">Equus burchelli</name>
    <dbReference type="NCBI Taxonomy" id="89252"/>
    <lineage>
        <taxon>Eukaryota</taxon>
        <taxon>Metazoa</taxon>
        <taxon>Chordata</taxon>
        <taxon>Craniata</taxon>
        <taxon>Vertebrata</taxon>
        <taxon>Euteleostomi</taxon>
        <taxon>Mammalia</taxon>
        <taxon>Eutheria</taxon>
        <taxon>Laurasiatheria</taxon>
        <taxon>Perissodactyla</taxon>
        <taxon>Equidae</taxon>
        <taxon>Equus</taxon>
        <taxon>Equus quagga</taxon>
    </lineage>
</organism>
<accession>Q9XSN3</accession>
<comment type="function">
    <text>Involved in oxygen transport from the lung to the various peripheral tissues.</text>
</comment>
<comment type="function">
    <molecule>Hemopressin</molecule>
    <text evidence="1">Hemopressin acts as an antagonist peptide of the cannabinoid receptor CNR1. Hemopressin-binding efficiently blocks cannabinoid receptor CNR1 and subsequent signaling.</text>
</comment>
<comment type="subunit">
    <text>Heterotetramer of two alpha chains and two beta chains.</text>
</comment>
<comment type="tissue specificity">
    <text>Red blood cells.</text>
</comment>
<comment type="similarity">
    <text evidence="2">Belongs to the globin family.</text>
</comment>
<keyword id="KW-0349">Heme</keyword>
<keyword id="KW-0408">Iron</keyword>
<keyword id="KW-0479">Metal-binding</keyword>
<keyword id="KW-0561">Oxygen transport</keyword>
<keyword id="KW-0813">Transport</keyword>
<protein>
    <recommendedName>
        <fullName>Hemoglobin subunit alpha-1</fullName>
    </recommendedName>
    <alternativeName>
        <fullName>Alpha-1-globin</fullName>
    </alternativeName>
    <alternativeName>
        <fullName>Hemoglobin alpha-1 chain</fullName>
    </alternativeName>
    <component>
        <recommendedName>
            <fullName evidence="1">Hemopressin</fullName>
        </recommendedName>
    </component>
</protein>
<reference key="1">
    <citation type="journal article" date="1998" name="J. Mol. Evol.">
        <title>Phylogenetic relationships within the genus Equus and the evolution of alpha and theta globin genes.</title>
        <authorList>
            <person name="Oakenfull E.A."/>
            <person name="Clegg J.B."/>
        </authorList>
    </citation>
    <scope>NUCLEOTIDE SEQUENCE [GENOMIC DNA]</scope>
</reference>
<reference key="2">
    <citation type="journal article" date="1969" name="J. Biol. Chem.">
        <title>Structural comparison of the hemoglobins of the genus Equus with those of ruminants.</title>
        <authorList>
            <person name="Kitchen H."/>
            <person name="Easley C.W."/>
        </authorList>
    </citation>
    <scope>AMINO-ACID COMPOSITION</scope>
    <scope>MAPPING OF PEPTIDES</scope>
</reference>
<sequence>MVLSADDKSNVKAAWGKVGGNAGEFGAEALERMFLGFPTTKTYFPHFDLSHGSAQVKAHGKKVGDALTLAVGHLDDLPGALSNLSDLHAHKLRVDPVNFKLLSHCLLSTLAVHLPNDFTPAVHASLDKFLSTVSTVLTSKYR</sequence>
<feature type="chain" id="PRO_0000052625" description="Hemoglobin subunit alpha-1">
    <location>
        <begin position="1"/>
        <end position="142"/>
    </location>
</feature>
<feature type="peptide" id="PRO_0000455870" description="Hemopressin" evidence="1">
    <location>
        <begin position="96"/>
        <end position="104"/>
    </location>
</feature>
<feature type="domain" description="Globin" evidence="2">
    <location>
        <begin position="2"/>
        <end position="142"/>
    </location>
</feature>
<feature type="binding site" evidence="2">
    <location>
        <position position="59"/>
    </location>
    <ligand>
        <name>O2</name>
        <dbReference type="ChEBI" id="CHEBI:15379"/>
    </ligand>
</feature>
<feature type="binding site" description="proximal binding residue" evidence="2">
    <location>
        <position position="88"/>
    </location>
    <ligand>
        <name>heme b</name>
        <dbReference type="ChEBI" id="CHEBI:60344"/>
    </ligand>
    <ligandPart>
        <name>Fe</name>
        <dbReference type="ChEBI" id="CHEBI:18248"/>
    </ligandPart>
</feature>
<dbReference type="EMBL" id="U70200">
    <property type="protein sequence ID" value="AAB93461.1"/>
    <property type="molecule type" value="Genomic_DNA"/>
</dbReference>
<dbReference type="SMR" id="Q9XSN3"/>
<dbReference type="GO" id="GO:0072562">
    <property type="term" value="C:blood microparticle"/>
    <property type="evidence" value="ECO:0007669"/>
    <property type="project" value="TreeGrafter"/>
</dbReference>
<dbReference type="GO" id="GO:0031838">
    <property type="term" value="C:haptoglobin-hemoglobin complex"/>
    <property type="evidence" value="ECO:0007669"/>
    <property type="project" value="TreeGrafter"/>
</dbReference>
<dbReference type="GO" id="GO:0005833">
    <property type="term" value="C:hemoglobin complex"/>
    <property type="evidence" value="ECO:0007669"/>
    <property type="project" value="InterPro"/>
</dbReference>
<dbReference type="GO" id="GO:0031720">
    <property type="term" value="F:haptoglobin binding"/>
    <property type="evidence" value="ECO:0007669"/>
    <property type="project" value="TreeGrafter"/>
</dbReference>
<dbReference type="GO" id="GO:0020037">
    <property type="term" value="F:heme binding"/>
    <property type="evidence" value="ECO:0007669"/>
    <property type="project" value="InterPro"/>
</dbReference>
<dbReference type="GO" id="GO:0005506">
    <property type="term" value="F:iron ion binding"/>
    <property type="evidence" value="ECO:0007669"/>
    <property type="project" value="InterPro"/>
</dbReference>
<dbReference type="GO" id="GO:0043177">
    <property type="term" value="F:organic acid binding"/>
    <property type="evidence" value="ECO:0007669"/>
    <property type="project" value="TreeGrafter"/>
</dbReference>
<dbReference type="GO" id="GO:0019825">
    <property type="term" value="F:oxygen binding"/>
    <property type="evidence" value="ECO:0007669"/>
    <property type="project" value="InterPro"/>
</dbReference>
<dbReference type="GO" id="GO:0005344">
    <property type="term" value="F:oxygen carrier activity"/>
    <property type="evidence" value="ECO:0007669"/>
    <property type="project" value="UniProtKB-KW"/>
</dbReference>
<dbReference type="GO" id="GO:0004601">
    <property type="term" value="F:peroxidase activity"/>
    <property type="evidence" value="ECO:0007669"/>
    <property type="project" value="TreeGrafter"/>
</dbReference>
<dbReference type="GO" id="GO:0042744">
    <property type="term" value="P:hydrogen peroxide catabolic process"/>
    <property type="evidence" value="ECO:0007669"/>
    <property type="project" value="TreeGrafter"/>
</dbReference>
<dbReference type="CDD" id="cd08927">
    <property type="entry name" value="Hb-alpha-like"/>
    <property type="match status" value="1"/>
</dbReference>
<dbReference type="FunFam" id="1.10.490.10:FF:000002">
    <property type="entry name" value="Hemoglobin subunit alpha"/>
    <property type="match status" value="1"/>
</dbReference>
<dbReference type="Gene3D" id="1.10.490.10">
    <property type="entry name" value="Globins"/>
    <property type="match status" value="1"/>
</dbReference>
<dbReference type="InterPro" id="IPR000971">
    <property type="entry name" value="Globin"/>
</dbReference>
<dbReference type="InterPro" id="IPR009050">
    <property type="entry name" value="Globin-like_sf"/>
</dbReference>
<dbReference type="InterPro" id="IPR012292">
    <property type="entry name" value="Globin/Proto"/>
</dbReference>
<dbReference type="InterPro" id="IPR002338">
    <property type="entry name" value="Hemoglobin_a-typ"/>
</dbReference>
<dbReference type="InterPro" id="IPR050056">
    <property type="entry name" value="Hemoglobin_oxygen_transport"/>
</dbReference>
<dbReference type="InterPro" id="IPR002339">
    <property type="entry name" value="Hemoglobin_pi"/>
</dbReference>
<dbReference type="PANTHER" id="PTHR11442">
    <property type="entry name" value="HEMOGLOBIN FAMILY MEMBER"/>
    <property type="match status" value="1"/>
</dbReference>
<dbReference type="PANTHER" id="PTHR11442:SF48">
    <property type="entry name" value="HEMOGLOBIN SUBUNIT ALPHA"/>
    <property type="match status" value="1"/>
</dbReference>
<dbReference type="Pfam" id="PF00042">
    <property type="entry name" value="Globin"/>
    <property type="match status" value="1"/>
</dbReference>
<dbReference type="PRINTS" id="PR00612">
    <property type="entry name" value="ALPHAHAEM"/>
</dbReference>
<dbReference type="PRINTS" id="PR00815">
    <property type="entry name" value="PIHAEM"/>
</dbReference>
<dbReference type="SUPFAM" id="SSF46458">
    <property type="entry name" value="Globin-like"/>
    <property type="match status" value="1"/>
</dbReference>
<dbReference type="PROSITE" id="PS01033">
    <property type="entry name" value="GLOBIN"/>
    <property type="match status" value="1"/>
</dbReference>
<evidence type="ECO:0000250" key="1">
    <source>
        <dbReference type="UniProtKB" id="P01946"/>
    </source>
</evidence>
<evidence type="ECO:0000255" key="2">
    <source>
        <dbReference type="PROSITE-ProRule" id="PRU00238"/>
    </source>
</evidence>
<gene>
    <name type="primary">HBA1</name>
</gene>
<name>HBA1_EQUQB</name>
<proteinExistence type="evidence at protein level"/>